<organism>
    <name type="scientific">Wigglesworthia glossinidia brevipalpis</name>
    <dbReference type="NCBI Taxonomy" id="36870"/>
    <lineage>
        <taxon>Bacteria</taxon>
        <taxon>Pseudomonadati</taxon>
        <taxon>Pseudomonadota</taxon>
        <taxon>Gammaproteobacteria</taxon>
        <taxon>Enterobacterales</taxon>
        <taxon>Erwiniaceae</taxon>
        <taxon>Wigglesworthia</taxon>
    </lineage>
</organism>
<gene>
    <name evidence="1" type="primary">pdxB</name>
    <name type="ordered locus">WIGBR3080</name>
</gene>
<protein>
    <recommendedName>
        <fullName evidence="1">Erythronate-4-phosphate dehydrogenase</fullName>
        <ecNumber evidence="1">1.1.1.290</ecNumber>
    </recommendedName>
</protein>
<accession>Q8D2P6</accession>
<name>PDXB_WIGBR</name>
<comment type="function">
    <text evidence="1">Catalyzes the oxidation of erythronate-4-phosphate to 3-hydroxy-2-oxo-4-phosphonooxybutanoate.</text>
</comment>
<comment type="catalytic activity">
    <reaction evidence="1">
        <text>4-phospho-D-erythronate + NAD(+) = (R)-3-hydroxy-2-oxo-4-phosphooxybutanoate + NADH + H(+)</text>
        <dbReference type="Rhea" id="RHEA:18829"/>
        <dbReference type="ChEBI" id="CHEBI:15378"/>
        <dbReference type="ChEBI" id="CHEBI:57540"/>
        <dbReference type="ChEBI" id="CHEBI:57945"/>
        <dbReference type="ChEBI" id="CHEBI:58538"/>
        <dbReference type="ChEBI" id="CHEBI:58766"/>
        <dbReference type="EC" id="1.1.1.290"/>
    </reaction>
</comment>
<comment type="pathway">
    <text evidence="1">Cofactor biosynthesis; pyridoxine 5'-phosphate biosynthesis; pyridoxine 5'-phosphate from D-erythrose 4-phosphate: step 2/5.</text>
</comment>
<comment type="subunit">
    <text evidence="1">Homodimer.</text>
</comment>
<comment type="subcellular location">
    <subcellularLocation>
        <location evidence="1">Cytoplasm</location>
    </subcellularLocation>
</comment>
<comment type="similarity">
    <text evidence="1">Belongs to the D-isomer specific 2-hydroxyacid dehydrogenase family. PdxB subfamily.</text>
</comment>
<feature type="chain" id="PRO_0000075995" description="Erythronate-4-phosphate dehydrogenase">
    <location>
        <begin position="1"/>
        <end position="378"/>
    </location>
</feature>
<feature type="active site" evidence="1">
    <location>
        <position position="207"/>
    </location>
</feature>
<feature type="active site" evidence="1">
    <location>
        <position position="236"/>
    </location>
</feature>
<feature type="active site" description="Proton donor" evidence="1">
    <location>
        <position position="253"/>
    </location>
</feature>
<feature type="binding site" evidence="1">
    <location>
        <position position="45"/>
    </location>
    <ligand>
        <name>substrate</name>
    </ligand>
</feature>
<feature type="binding site" evidence="1">
    <location>
        <position position="66"/>
    </location>
    <ligand>
        <name>substrate</name>
    </ligand>
</feature>
<feature type="binding site" evidence="1">
    <location>
        <position position="146"/>
    </location>
    <ligand>
        <name>NAD(+)</name>
        <dbReference type="ChEBI" id="CHEBI:57540"/>
    </ligand>
</feature>
<feature type="binding site" evidence="1">
    <location>
        <position position="231"/>
    </location>
    <ligand>
        <name>NAD(+)</name>
        <dbReference type="ChEBI" id="CHEBI:57540"/>
    </ligand>
</feature>
<feature type="binding site" evidence="1">
    <location>
        <position position="256"/>
    </location>
    <ligand>
        <name>NAD(+)</name>
        <dbReference type="ChEBI" id="CHEBI:57540"/>
    </ligand>
</feature>
<keyword id="KW-0963">Cytoplasm</keyword>
<keyword id="KW-0520">NAD</keyword>
<keyword id="KW-0560">Oxidoreductase</keyword>
<keyword id="KW-0664">Pyridoxine biosynthesis</keyword>
<keyword id="KW-1185">Reference proteome</keyword>
<evidence type="ECO:0000255" key="1">
    <source>
        <dbReference type="HAMAP-Rule" id="MF_01825"/>
    </source>
</evidence>
<proteinExistence type="inferred from homology"/>
<dbReference type="EC" id="1.1.1.290" evidence="1"/>
<dbReference type="EMBL" id="BA000021">
    <property type="protein sequence ID" value="BAC24454.1"/>
    <property type="molecule type" value="Genomic_DNA"/>
</dbReference>
<dbReference type="SMR" id="Q8D2P6"/>
<dbReference type="STRING" id="36870.gene:10368804"/>
<dbReference type="KEGG" id="wbr:pdxB"/>
<dbReference type="eggNOG" id="COG0111">
    <property type="taxonomic scope" value="Bacteria"/>
</dbReference>
<dbReference type="HOGENOM" id="CLU_019796_4_0_6"/>
<dbReference type="OrthoDB" id="9770208at2"/>
<dbReference type="UniPathway" id="UPA00244">
    <property type="reaction ID" value="UER00310"/>
</dbReference>
<dbReference type="Proteomes" id="UP000000562">
    <property type="component" value="Chromosome"/>
</dbReference>
<dbReference type="GO" id="GO:0005737">
    <property type="term" value="C:cytoplasm"/>
    <property type="evidence" value="ECO:0007669"/>
    <property type="project" value="UniProtKB-SubCell"/>
</dbReference>
<dbReference type="GO" id="GO:0033711">
    <property type="term" value="F:4-phosphoerythronate dehydrogenase activity"/>
    <property type="evidence" value="ECO:0007669"/>
    <property type="project" value="UniProtKB-EC"/>
</dbReference>
<dbReference type="GO" id="GO:0051287">
    <property type="term" value="F:NAD binding"/>
    <property type="evidence" value="ECO:0007669"/>
    <property type="project" value="InterPro"/>
</dbReference>
<dbReference type="GO" id="GO:0046983">
    <property type="term" value="F:protein dimerization activity"/>
    <property type="evidence" value="ECO:0007669"/>
    <property type="project" value="InterPro"/>
</dbReference>
<dbReference type="GO" id="GO:0008615">
    <property type="term" value="P:pyridoxine biosynthetic process"/>
    <property type="evidence" value="ECO:0007669"/>
    <property type="project" value="UniProtKB-UniRule"/>
</dbReference>
<dbReference type="CDD" id="cd12158">
    <property type="entry name" value="ErythrP_dh"/>
    <property type="match status" value="1"/>
</dbReference>
<dbReference type="Gene3D" id="3.30.1370.170">
    <property type="match status" value="1"/>
</dbReference>
<dbReference type="Gene3D" id="3.40.50.720">
    <property type="entry name" value="NAD(P)-binding Rossmann-like Domain"/>
    <property type="match status" value="2"/>
</dbReference>
<dbReference type="HAMAP" id="MF_01825">
    <property type="entry name" value="PdxB"/>
    <property type="match status" value="1"/>
</dbReference>
<dbReference type="InterPro" id="IPR050223">
    <property type="entry name" value="D-isomer_2-hydroxyacid_DH"/>
</dbReference>
<dbReference type="InterPro" id="IPR006139">
    <property type="entry name" value="D-isomer_2_OHA_DH_cat_dom"/>
</dbReference>
<dbReference type="InterPro" id="IPR029753">
    <property type="entry name" value="D-isomer_DH_CS"/>
</dbReference>
<dbReference type="InterPro" id="IPR029752">
    <property type="entry name" value="D-isomer_DH_CS1"/>
</dbReference>
<dbReference type="InterPro" id="IPR006140">
    <property type="entry name" value="D-isomer_DH_NAD-bd"/>
</dbReference>
<dbReference type="InterPro" id="IPR020921">
    <property type="entry name" value="Erythronate-4-P_DHase"/>
</dbReference>
<dbReference type="InterPro" id="IPR024531">
    <property type="entry name" value="Erythronate-4-P_DHase_dimer"/>
</dbReference>
<dbReference type="InterPro" id="IPR036291">
    <property type="entry name" value="NAD(P)-bd_dom_sf"/>
</dbReference>
<dbReference type="InterPro" id="IPR038251">
    <property type="entry name" value="PdxB_dimer_sf"/>
</dbReference>
<dbReference type="PANTHER" id="PTHR10996">
    <property type="entry name" value="2-HYDROXYACID DEHYDROGENASE-RELATED"/>
    <property type="match status" value="1"/>
</dbReference>
<dbReference type="Pfam" id="PF00389">
    <property type="entry name" value="2-Hacid_dh"/>
    <property type="match status" value="1"/>
</dbReference>
<dbReference type="Pfam" id="PF02826">
    <property type="entry name" value="2-Hacid_dh_C"/>
    <property type="match status" value="1"/>
</dbReference>
<dbReference type="Pfam" id="PF11890">
    <property type="entry name" value="DUF3410"/>
    <property type="match status" value="1"/>
</dbReference>
<dbReference type="SUPFAM" id="SSF52283">
    <property type="entry name" value="Formate/glycerate dehydrogenase catalytic domain-like"/>
    <property type="match status" value="1"/>
</dbReference>
<dbReference type="SUPFAM" id="SSF51735">
    <property type="entry name" value="NAD(P)-binding Rossmann-fold domains"/>
    <property type="match status" value="1"/>
</dbReference>
<dbReference type="PROSITE" id="PS00065">
    <property type="entry name" value="D_2_HYDROXYACID_DH_1"/>
    <property type="match status" value="1"/>
</dbReference>
<dbReference type="PROSITE" id="PS00671">
    <property type="entry name" value="D_2_HYDROXYACID_DH_3"/>
    <property type="match status" value="1"/>
</dbReference>
<reference key="1">
    <citation type="journal article" date="2002" name="Nat. Genet.">
        <title>Genome sequence of the endocellular obligate symbiont of tsetse flies, Wigglesworthia glossinidia.</title>
        <authorList>
            <person name="Akman L."/>
            <person name="Yamashita A."/>
            <person name="Watanabe H."/>
            <person name="Oshima K."/>
            <person name="Shiba T."/>
            <person name="Hattori M."/>
            <person name="Aksoy S."/>
        </authorList>
    </citation>
    <scope>NUCLEOTIDE SEQUENCE [LARGE SCALE GENOMIC DNA]</scope>
</reference>
<sequence>MKILIDNNIIFSYSLFKKIGKVNLINSIDINAKNISGFDALIIKSSTNVNENLLKNSNIKFIGSATSGKDHVDVDWLKKNKINFDFAPGCNSVAVAEYVFSSMLYFAYRDKFSLLKKTVGIVGFGNIGKCLNKKLSAIGVKTILCDPILEEKNNIKLKSLNEIVQNSDIITLHVPLTYSGKYPTWHLINKKILLDLKDNCILINTSRGSVIDNNSLLNILKEGKPIRVVLDVWENEPLICSKLLSLIDIGTPHIAGHSLEGKIKGTISIFNSLCNFVGKKNKKYFISSFIDPYEIEYISMKGRIDQSKIYLLSLLSNNILYDDHELRKNFNKKNCFVNLRNSYRKRREWSSLFIKSNNILFSNLLNKIGFNSKFFKEK</sequence>